<proteinExistence type="evidence at transcript level"/>
<keyword id="KW-0021">Allosteric enzyme</keyword>
<keyword id="KW-0150">Chloroplast</keyword>
<keyword id="KW-0934">Plastid</keyword>
<keyword id="KW-0665">Pyrimidine biosynthesis</keyword>
<keyword id="KW-0808">Transferase</keyword>
<keyword id="KW-0809">Transit peptide</keyword>
<dbReference type="EC" id="2.1.3.2" evidence="1"/>
<dbReference type="EMBL" id="L15798">
    <property type="protein sequence ID" value="AAA62444.1"/>
    <property type="molecule type" value="mRNA"/>
</dbReference>
<dbReference type="PIR" id="T10181">
    <property type="entry name" value="T10181"/>
</dbReference>
<dbReference type="SMR" id="Q43087"/>
<dbReference type="OrthoDB" id="1924069at2759"/>
<dbReference type="UniPathway" id="UPA00070">
    <property type="reaction ID" value="UER00116"/>
</dbReference>
<dbReference type="GO" id="GO:0009507">
    <property type="term" value="C:chloroplast"/>
    <property type="evidence" value="ECO:0007669"/>
    <property type="project" value="UniProtKB-SubCell"/>
</dbReference>
<dbReference type="GO" id="GO:0016597">
    <property type="term" value="F:amino acid binding"/>
    <property type="evidence" value="ECO:0007669"/>
    <property type="project" value="InterPro"/>
</dbReference>
<dbReference type="GO" id="GO:0004070">
    <property type="term" value="F:aspartate carbamoyltransferase activity"/>
    <property type="evidence" value="ECO:0007669"/>
    <property type="project" value="UniProtKB-EC"/>
</dbReference>
<dbReference type="GO" id="GO:0006207">
    <property type="term" value="P:'de novo' pyrimidine nucleobase biosynthetic process"/>
    <property type="evidence" value="ECO:0007669"/>
    <property type="project" value="InterPro"/>
</dbReference>
<dbReference type="GO" id="GO:0044205">
    <property type="term" value="P:'de novo' UMP biosynthetic process"/>
    <property type="evidence" value="ECO:0007669"/>
    <property type="project" value="UniProtKB-UniPathway"/>
</dbReference>
<dbReference type="GO" id="GO:0006520">
    <property type="term" value="P:amino acid metabolic process"/>
    <property type="evidence" value="ECO:0007669"/>
    <property type="project" value="InterPro"/>
</dbReference>
<dbReference type="FunFam" id="3.40.50.1370:FF:000001">
    <property type="entry name" value="Aspartate carbamoyltransferase"/>
    <property type="match status" value="1"/>
</dbReference>
<dbReference type="FunFam" id="3.40.50.1370:FF:000002">
    <property type="entry name" value="Aspartate carbamoyltransferase 2"/>
    <property type="match status" value="1"/>
</dbReference>
<dbReference type="Gene3D" id="3.40.50.1370">
    <property type="entry name" value="Aspartate/ornithine carbamoyltransferase"/>
    <property type="match status" value="2"/>
</dbReference>
<dbReference type="HAMAP" id="MF_00001">
    <property type="entry name" value="Asp_carb_tr"/>
    <property type="match status" value="1"/>
</dbReference>
<dbReference type="InterPro" id="IPR006132">
    <property type="entry name" value="Asp/Orn_carbamoyltranf_P-bd"/>
</dbReference>
<dbReference type="InterPro" id="IPR006130">
    <property type="entry name" value="Asp/Orn_carbamoylTrfase"/>
</dbReference>
<dbReference type="InterPro" id="IPR036901">
    <property type="entry name" value="Asp/Orn_carbamoylTrfase_sf"/>
</dbReference>
<dbReference type="InterPro" id="IPR002082">
    <property type="entry name" value="Asp_carbamoyltransf"/>
</dbReference>
<dbReference type="InterPro" id="IPR006131">
    <property type="entry name" value="Asp_carbamoyltransf_Asp/Orn-bd"/>
</dbReference>
<dbReference type="NCBIfam" id="TIGR00670">
    <property type="entry name" value="asp_carb_tr"/>
    <property type="match status" value="1"/>
</dbReference>
<dbReference type="NCBIfam" id="NF002032">
    <property type="entry name" value="PRK00856.1"/>
    <property type="match status" value="1"/>
</dbReference>
<dbReference type="PANTHER" id="PTHR45753:SF6">
    <property type="entry name" value="ASPARTATE CARBAMOYLTRANSFERASE"/>
    <property type="match status" value="1"/>
</dbReference>
<dbReference type="PANTHER" id="PTHR45753">
    <property type="entry name" value="ORNITHINE CARBAMOYLTRANSFERASE, MITOCHONDRIAL"/>
    <property type="match status" value="1"/>
</dbReference>
<dbReference type="Pfam" id="PF00185">
    <property type="entry name" value="OTCace"/>
    <property type="match status" value="1"/>
</dbReference>
<dbReference type="Pfam" id="PF02729">
    <property type="entry name" value="OTCace_N"/>
    <property type="match status" value="1"/>
</dbReference>
<dbReference type="PRINTS" id="PR00100">
    <property type="entry name" value="AOTCASE"/>
</dbReference>
<dbReference type="PRINTS" id="PR00101">
    <property type="entry name" value="ATCASE"/>
</dbReference>
<dbReference type="SUPFAM" id="SSF53671">
    <property type="entry name" value="Aspartate/ornithine carbamoyltransferase"/>
    <property type="match status" value="1"/>
</dbReference>
<dbReference type="PROSITE" id="PS00097">
    <property type="entry name" value="CARBAMOYLTRANSFERASE"/>
    <property type="match status" value="1"/>
</dbReference>
<comment type="function">
    <text evidence="1">Catalyzes the condensation of carbamoyl phosphate and aspartate to form carbamoyl aspartate and inorganic phosphate, the committed step in the de novo pyrimidine nucleotide biosynthesis pathway.</text>
</comment>
<comment type="catalytic activity">
    <reaction evidence="1">
        <text>carbamoyl phosphate + L-aspartate = N-carbamoyl-L-aspartate + phosphate + H(+)</text>
        <dbReference type="Rhea" id="RHEA:20013"/>
        <dbReference type="ChEBI" id="CHEBI:15378"/>
        <dbReference type="ChEBI" id="CHEBI:29991"/>
        <dbReference type="ChEBI" id="CHEBI:32814"/>
        <dbReference type="ChEBI" id="CHEBI:43474"/>
        <dbReference type="ChEBI" id="CHEBI:58228"/>
        <dbReference type="EC" id="2.1.3.2"/>
    </reaction>
</comment>
<comment type="activity regulation">
    <text evidence="2">Feedback inhibited by UMP.</text>
</comment>
<comment type="pathway">
    <text evidence="1">Pyrimidine metabolism; UMP biosynthesis via de novo pathway; (S)-dihydroorotate from bicarbonate: step 2/3.</text>
</comment>
<comment type="subunit">
    <text evidence="5">Homotrimer.</text>
</comment>
<comment type="subcellular location">
    <subcellularLocation>
        <location>Plastid</location>
        <location>Chloroplast</location>
    </subcellularLocation>
</comment>
<comment type="similarity">
    <text evidence="4">Belongs to the aspartate/ornithine carbamoyltransferase superfamily. ATCase family.</text>
</comment>
<feature type="transit peptide" description="Chloroplast" evidence="3">
    <location>
        <begin position="1"/>
        <end position="30"/>
    </location>
</feature>
<feature type="chain" id="PRO_0000020350" description="Aspartate carbamoyltransferase 2, chloroplastic">
    <location>
        <begin position="31"/>
        <end position="385"/>
    </location>
</feature>
<feature type="binding site" evidence="1">
    <location>
        <position position="131"/>
    </location>
    <ligand>
        <name>carbamoyl phosphate</name>
        <dbReference type="ChEBI" id="CHEBI:58228"/>
    </ligand>
</feature>
<feature type="binding site" evidence="2">
    <location>
        <position position="131"/>
    </location>
    <ligand>
        <name>UMP</name>
        <dbReference type="ChEBI" id="CHEBI:57865"/>
        <note>inhibitor</note>
    </ligand>
</feature>
<feature type="binding site" evidence="1">
    <location>
        <position position="132"/>
    </location>
    <ligand>
        <name>carbamoyl phosphate</name>
        <dbReference type="ChEBI" id="CHEBI:58228"/>
    </ligand>
</feature>
<feature type="binding site" evidence="2">
    <location>
        <position position="132"/>
    </location>
    <ligand>
        <name>UMP</name>
        <dbReference type="ChEBI" id="CHEBI:57865"/>
        <note>inhibitor</note>
    </ligand>
</feature>
<feature type="binding site" evidence="1">
    <location>
        <position position="161"/>
    </location>
    <ligand>
        <name>L-aspartate</name>
        <dbReference type="ChEBI" id="CHEBI:29991"/>
    </ligand>
</feature>
<feature type="binding site" evidence="1">
    <location>
        <position position="182"/>
    </location>
    <ligand>
        <name>carbamoyl phosphate</name>
        <dbReference type="ChEBI" id="CHEBI:58228"/>
    </ligand>
</feature>
<feature type="binding site" evidence="2">
    <location>
        <position position="182"/>
    </location>
    <ligand>
        <name>UMP</name>
        <dbReference type="ChEBI" id="CHEBI:57865"/>
        <note>inhibitor</note>
    </ligand>
</feature>
<feature type="binding site" evidence="1">
    <location>
        <position position="210"/>
    </location>
    <ligand>
        <name>carbamoyl phosphate</name>
        <dbReference type="ChEBI" id="CHEBI:58228"/>
    </ligand>
</feature>
<feature type="binding site" evidence="2">
    <location>
        <position position="210"/>
    </location>
    <ligand>
        <name>UMP</name>
        <dbReference type="ChEBI" id="CHEBI:57865"/>
        <note>inhibitor</note>
    </ligand>
</feature>
<feature type="binding site" evidence="1">
    <location>
        <position position="213"/>
    </location>
    <ligand>
        <name>carbamoyl phosphate</name>
        <dbReference type="ChEBI" id="CHEBI:58228"/>
    </ligand>
</feature>
<feature type="binding site" evidence="1">
    <location>
        <position position="243"/>
    </location>
    <ligand>
        <name>L-aspartate</name>
        <dbReference type="ChEBI" id="CHEBI:29991"/>
    </ligand>
</feature>
<feature type="binding site" evidence="2">
    <location>
        <position position="243"/>
    </location>
    <ligand>
        <name>UMP</name>
        <dbReference type="ChEBI" id="CHEBI:57865"/>
        <note>inhibitor</note>
    </ligand>
</feature>
<feature type="binding site" evidence="1">
    <location>
        <position position="305"/>
    </location>
    <ligand>
        <name>L-aspartate</name>
        <dbReference type="ChEBI" id="CHEBI:29991"/>
    </ligand>
</feature>
<feature type="binding site" evidence="2">
    <location>
        <position position="305"/>
    </location>
    <ligand>
        <name>UMP</name>
        <dbReference type="ChEBI" id="CHEBI:57865"/>
        <note>inhibitor</note>
    </ligand>
</feature>
<feature type="binding site" evidence="1">
    <location>
        <position position="345"/>
    </location>
    <ligand>
        <name>carbamoyl phosphate</name>
        <dbReference type="ChEBI" id="CHEBI:58228"/>
    </ligand>
</feature>
<feature type="binding site" evidence="1">
    <location>
        <position position="346"/>
    </location>
    <ligand>
        <name>carbamoyl phosphate</name>
        <dbReference type="ChEBI" id="CHEBI:58228"/>
    </ligand>
</feature>
<evidence type="ECO:0000250" key="1">
    <source>
        <dbReference type="UniProtKB" id="P0A786"/>
    </source>
</evidence>
<evidence type="ECO:0000250" key="2">
    <source>
        <dbReference type="UniProtKB" id="P49077"/>
    </source>
</evidence>
<evidence type="ECO:0000255" key="3"/>
<evidence type="ECO:0000305" key="4"/>
<evidence type="ECO:0000305" key="5">
    <source>
    </source>
</evidence>
<reference key="1">
    <citation type="journal article" date="1994" name="Plant Physiol.">
        <title>Molecular cloning and characterization of the pyrB1 and pyrB2 genes encoding aspartate transcarbamoylase in pea (Pisum sativum L.).</title>
        <authorList>
            <person name="Williamson C.L."/>
            <person name="Slocum R.D."/>
        </authorList>
    </citation>
    <scope>NUCLEOTIDE SEQUENCE [MRNA]</scope>
    <source>
        <strain>cv. Wando</strain>
        <tissue>Leaf</tissue>
    </source>
</reference>
<name>PYRB2_PEA</name>
<protein>
    <recommendedName>
        <fullName>Aspartate carbamoyltransferase 2, chloroplastic</fullName>
        <ecNumber evidence="1">2.1.3.2</ecNumber>
    </recommendedName>
    <alternativeName>
        <fullName>Aspartate transcarbamylase 2</fullName>
        <shortName>ATCase 2</shortName>
    </alternativeName>
</protein>
<gene>
    <name type="primary">PYRB2</name>
</gene>
<sequence length="385" mass="43745">MTASSSLFSCSMHMEVLTPKISKWPKNFVSCHSKISYVETNYLKSTCYPISRFFCINNLKKTRQRDGIHCFSEGQKFQLDDVVEAQQFDRDILNAIFEVARDMEKIERNSPESQILKGYLMATLFYEPSTRTRLSFESAMRRLGGEVLTTENAREFSSAAKGETLEDTIRTVEGYSDLIVLRHFESGAARRAATIAGIPIVNAGDGPGQHPSQALLDVYTIEREIGKLDGIKVGLVGDLANGRTVRSLTYLLAKYKDVKIYFVSPEVVKMKDDIKDYLTSKGVDWEESSDLVEVASECDVVYQTRIQKERFGERLDLYEKARGKFIVNQNILNAMQRHAVIMHPLPRLDEITVDVDADPRAAYFRQAKYGLYIRMALLKLLLVGW</sequence>
<accession>Q43087</accession>
<organism>
    <name type="scientific">Pisum sativum</name>
    <name type="common">Garden pea</name>
    <name type="synonym">Lathyrus oleraceus</name>
    <dbReference type="NCBI Taxonomy" id="3888"/>
    <lineage>
        <taxon>Eukaryota</taxon>
        <taxon>Viridiplantae</taxon>
        <taxon>Streptophyta</taxon>
        <taxon>Embryophyta</taxon>
        <taxon>Tracheophyta</taxon>
        <taxon>Spermatophyta</taxon>
        <taxon>Magnoliopsida</taxon>
        <taxon>eudicotyledons</taxon>
        <taxon>Gunneridae</taxon>
        <taxon>Pentapetalae</taxon>
        <taxon>rosids</taxon>
        <taxon>fabids</taxon>
        <taxon>Fabales</taxon>
        <taxon>Fabaceae</taxon>
        <taxon>Papilionoideae</taxon>
        <taxon>50 kb inversion clade</taxon>
        <taxon>NPAAA clade</taxon>
        <taxon>Hologalegina</taxon>
        <taxon>IRL clade</taxon>
        <taxon>Fabeae</taxon>
        <taxon>Pisum</taxon>
    </lineage>
</organism>